<protein>
    <recommendedName>
        <fullName evidence="1">Cobyric acid synthase</fullName>
    </recommendedName>
</protein>
<organism>
    <name type="scientific">Saccharophagus degradans (strain 2-40 / ATCC 43961 / DSM 17024)</name>
    <dbReference type="NCBI Taxonomy" id="203122"/>
    <lineage>
        <taxon>Bacteria</taxon>
        <taxon>Pseudomonadati</taxon>
        <taxon>Pseudomonadota</taxon>
        <taxon>Gammaproteobacteria</taxon>
        <taxon>Cellvibrionales</taxon>
        <taxon>Cellvibrionaceae</taxon>
        <taxon>Saccharophagus</taxon>
    </lineage>
</organism>
<keyword id="KW-0169">Cobalamin biosynthesis</keyword>
<keyword id="KW-0315">Glutamine amidotransferase</keyword>
<keyword id="KW-1185">Reference proteome</keyword>
<accession>Q21P75</accession>
<dbReference type="EMBL" id="CP000282">
    <property type="protein sequence ID" value="ABD79504.1"/>
    <property type="molecule type" value="Genomic_DNA"/>
</dbReference>
<dbReference type="RefSeq" id="WP_011466728.1">
    <property type="nucleotide sequence ID" value="NC_007912.1"/>
</dbReference>
<dbReference type="SMR" id="Q21P75"/>
<dbReference type="STRING" id="203122.Sde_0240"/>
<dbReference type="GeneID" id="98611945"/>
<dbReference type="KEGG" id="sde:Sde_0240"/>
<dbReference type="eggNOG" id="COG1492">
    <property type="taxonomic scope" value="Bacteria"/>
</dbReference>
<dbReference type="HOGENOM" id="CLU_019250_2_2_6"/>
<dbReference type="OrthoDB" id="9808302at2"/>
<dbReference type="UniPathway" id="UPA00148"/>
<dbReference type="Proteomes" id="UP000001947">
    <property type="component" value="Chromosome"/>
</dbReference>
<dbReference type="GO" id="GO:0015420">
    <property type="term" value="F:ABC-type vitamin B12 transporter activity"/>
    <property type="evidence" value="ECO:0007669"/>
    <property type="project" value="UniProtKB-UniRule"/>
</dbReference>
<dbReference type="GO" id="GO:0003824">
    <property type="term" value="F:catalytic activity"/>
    <property type="evidence" value="ECO:0007669"/>
    <property type="project" value="InterPro"/>
</dbReference>
<dbReference type="GO" id="GO:0009236">
    <property type="term" value="P:cobalamin biosynthetic process"/>
    <property type="evidence" value="ECO:0007669"/>
    <property type="project" value="UniProtKB-UniRule"/>
</dbReference>
<dbReference type="CDD" id="cd05389">
    <property type="entry name" value="CobQ_N"/>
    <property type="match status" value="1"/>
</dbReference>
<dbReference type="CDD" id="cd01750">
    <property type="entry name" value="GATase1_CobQ"/>
    <property type="match status" value="1"/>
</dbReference>
<dbReference type="Gene3D" id="3.40.50.880">
    <property type="match status" value="1"/>
</dbReference>
<dbReference type="Gene3D" id="3.40.50.300">
    <property type="entry name" value="P-loop containing nucleotide triphosphate hydrolases"/>
    <property type="match status" value="1"/>
</dbReference>
<dbReference type="HAMAP" id="MF_00028">
    <property type="entry name" value="CobQ"/>
    <property type="match status" value="1"/>
</dbReference>
<dbReference type="InterPro" id="IPR029062">
    <property type="entry name" value="Class_I_gatase-like"/>
</dbReference>
<dbReference type="InterPro" id="IPR002586">
    <property type="entry name" value="CobQ/CobB/MinD/ParA_Nub-bd_dom"/>
</dbReference>
<dbReference type="InterPro" id="IPR033949">
    <property type="entry name" value="CobQ_GATase1"/>
</dbReference>
<dbReference type="InterPro" id="IPR047045">
    <property type="entry name" value="CobQ_N"/>
</dbReference>
<dbReference type="InterPro" id="IPR004459">
    <property type="entry name" value="CobQ_synth"/>
</dbReference>
<dbReference type="InterPro" id="IPR011698">
    <property type="entry name" value="GATase_3"/>
</dbReference>
<dbReference type="InterPro" id="IPR027417">
    <property type="entry name" value="P-loop_NTPase"/>
</dbReference>
<dbReference type="NCBIfam" id="TIGR00313">
    <property type="entry name" value="cobQ"/>
    <property type="match status" value="1"/>
</dbReference>
<dbReference type="NCBIfam" id="NF001989">
    <property type="entry name" value="PRK00784.1"/>
    <property type="match status" value="1"/>
</dbReference>
<dbReference type="PANTHER" id="PTHR21343:SF1">
    <property type="entry name" value="COBYRIC ACID SYNTHASE"/>
    <property type="match status" value="1"/>
</dbReference>
<dbReference type="PANTHER" id="PTHR21343">
    <property type="entry name" value="DETHIOBIOTIN SYNTHETASE"/>
    <property type="match status" value="1"/>
</dbReference>
<dbReference type="Pfam" id="PF01656">
    <property type="entry name" value="CbiA"/>
    <property type="match status" value="1"/>
</dbReference>
<dbReference type="Pfam" id="PF07685">
    <property type="entry name" value="GATase_3"/>
    <property type="match status" value="1"/>
</dbReference>
<dbReference type="SUPFAM" id="SSF52317">
    <property type="entry name" value="Class I glutamine amidotransferase-like"/>
    <property type="match status" value="1"/>
</dbReference>
<dbReference type="SUPFAM" id="SSF52540">
    <property type="entry name" value="P-loop containing nucleoside triphosphate hydrolases"/>
    <property type="match status" value="1"/>
</dbReference>
<dbReference type="PROSITE" id="PS51274">
    <property type="entry name" value="GATASE_COBBQ"/>
    <property type="match status" value="1"/>
</dbReference>
<comment type="function">
    <text evidence="1">Catalyzes amidations at positions B, D, E, and G on adenosylcobyrinic A,C-diamide. NH(2) groups are provided by glutamine, and one molecule of ATP is hydrogenolyzed for each amidation.</text>
</comment>
<comment type="pathway">
    <text evidence="1">Cofactor biosynthesis; adenosylcobalamin biosynthesis.</text>
</comment>
<comment type="similarity">
    <text evidence="1">Belongs to the CobB/CobQ family. CobQ subfamily.</text>
</comment>
<evidence type="ECO:0000255" key="1">
    <source>
        <dbReference type="HAMAP-Rule" id="MF_00028"/>
    </source>
</evidence>
<proteinExistence type="inferred from homology"/>
<name>COBQ_SACD2</name>
<feature type="chain" id="PRO_1000002375" description="Cobyric acid synthase">
    <location>
        <begin position="1"/>
        <end position="485"/>
    </location>
</feature>
<feature type="domain" description="GATase cobBQ-type" evidence="1">
    <location>
        <begin position="249"/>
        <end position="437"/>
    </location>
</feature>
<feature type="active site" description="Nucleophile" evidence="1">
    <location>
        <position position="330"/>
    </location>
</feature>
<feature type="active site" evidence="1">
    <location>
        <position position="429"/>
    </location>
</feature>
<gene>
    <name evidence="1" type="primary">cobQ</name>
    <name type="ordered locus">Sde_0240</name>
</gene>
<sequence length="485" mass="52494">MTTTLMIQGTTSDAGKTTLVAALCRILARKGIKVAPFKPQNMALNSAVTEDGGEIGRGQAVQAQAAGIAPHTDMNPILLKPSTDTGAQVIVHGKALSAMEADAYHDYKKVAMQAVLESYRRLQTQYQVIVVEGAGSPAEINLREGDIANMGFAEEVDCPVIIIADIDKGGVFAHLVGTLELLSASEQKRVVGFVINRFRGDIELLKPGLTWLEQKTNKPVLGVIPYIQKLHLEAEDALTANSTAENTQHLKIRVPVWQRISNHTDFDPLRLHPQVDFAFVGPGQSLEGADLIILPGTKNTIADLNFMRSQGWDTQLAKHLRYGGKVLGICGGLQMLGTALHDPHGIESPASSVNGLGYLDFETTFTQHKTLLNLQGELHINDKPVAISGYEIHAGLSTGPAFQRPIIYCEGQPEGCRSADDQIIATYWHGLFSQPSATQALLAWAGLTNARALDYSALIETELTRLADEVEQCMDIDALFPTFAS</sequence>
<reference key="1">
    <citation type="journal article" date="2008" name="PLoS Genet.">
        <title>Complete genome sequence of the complex carbohydrate-degrading marine bacterium, Saccharophagus degradans strain 2-40 T.</title>
        <authorList>
            <person name="Weiner R.M."/>
            <person name="Taylor L.E. II"/>
            <person name="Henrissat B."/>
            <person name="Hauser L."/>
            <person name="Land M."/>
            <person name="Coutinho P.M."/>
            <person name="Rancurel C."/>
            <person name="Saunders E.H."/>
            <person name="Longmire A.G."/>
            <person name="Zhang H."/>
            <person name="Bayer E.A."/>
            <person name="Gilbert H.J."/>
            <person name="Larimer F."/>
            <person name="Zhulin I.B."/>
            <person name="Ekborg N.A."/>
            <person name="Lamed R."/>
            <person name="Richardson P.M."/>
            <person name="Borovok I."/>
            <person name="Hutcheson S."/>
        </authorList>
    </citation>
    <scope>NUCLEOTIDE SEQUENCE [LARGE SCALE GENOMIC DNA]</scope>
    <source>
        <strain>2-40 / ATCC 43961 / DSM 17024</strain>
    </source>
</reference>